<reference key="1">
    <citation type="journal article" date="2003" name="Proc. Natl. Acad. Sci. U.S.A.">
        <title>Complete genome sequence of the Q-fever pathogen, Coxiella burnetii.</title>
        <authorList>
            <person name="Seshadri R."/>
            <person name="Paulsen I.T."/>
            <person name="Eisen J.A."/>
            <person name="Read T.D."/>
            <person name="Nelson K.E."/>
            <person name="Nelson W.C."/>
            <person name="Ward N.L."/>
            <person name="Tettelin H."/>
            <person name="Davidsen T.M."/>
            <person name="Beanan M.J."/>
            <person name="DeBoy R.T."/>
            <person name="Daugherty S.C."/>
            <person name="Brinkac L.M."/>
            <person name="Madupu R."/>
            <person name="Dodson R.J."/>
            <person name="Khouri H.M."/>
            <person name="Lee K.H."/>
            <person name="Carty H.A."/>
            <person name="Scanlan D."/>
            <person name="Heinzen R.A."/>
            <person name="Thompson H.A."/>
            <person name="Samuel J.E."/>
            <person name="Fraser C.M."/>
            <person name="Heidelberg J.F."/>
        </authorList>
    </citation>
    <scope>NUCLEOTIDE SEQUENCE [LARGE SCALE GENOMIC DNA]</scope>
    <source>
        <strain>RSA 493 / Nine Mile phase I</strain>
    </source>
</reference>
<feature type="chain" id="PRO_0000326889" description="Protoheme IX farnesyltransferase">
    <location>
        <begin position="1"/>
        <end position="305"/>
    </location>
</feature>
<feature type="transmembrane region" description="Helical" evidence="1">
    <location>
        <begin position="28"/>
        <end position="48"/>
    </location>
</feature>
<feature type="transmembrane region" description="Helical" evidence="1">
    <location>
        <begin position="52"/>
        <end position="72"/>
    </location>
</feature>
<feature type="transmembrane region" description="Helical" evidence="1">
    <location>
        <begin position="102"/>
        <end position="122"/>
    </location>
</feature>
<feature type="transmembrane region" description="Helical" evidence="1">
    <location>
        <begin position="123"/>
        <end position="143"/>
    </location>
</feature>
<feature type="transmembrane region" description="Helical" evidence="1">
    <location>
        <begin position="150"/>
        <end position="170"/>
    </location>
</feature>
<feature type="transmembrane region" description="Helical" evidence="1">
    <location>
        <begin position="176"/>
        <end position="196"/>
    </location>
</feature>
<feature type="transmembrane region" description="Helical" evidence="1">
    <location>
        <begin position="221"/>
        <end position="241"/>
    </location>
</feature>
<feature type="transmembrane region" description="Helical" evidence="1">
    <location>
        <begin position="243"/>
        <end position="263"/>
    </location>
</feature>
<feature type="transmembrane region" description="Helical" evidence="1">
    <location>
        <begin position="282"/>
        <end position="302"/>
    </location>
</feature>
<sequence length="305" mass="34456">MRTRTEIVSTTQTSATWRDYFQLCKPRVVLLMLLTAIVGMCLASPGIVSWRVFLFGNLGIALAASSAAAINHLLEHHLDKLMRRTYRRPIVQGKINRKNAAIFAAILCILSMIILIAFVNLLTALLTFITLIGYAGFYTLYLKHATPQNIVIGGLAGAAPPLLGWVAVTGHIDPPALILLLIIFLWTPPHFWALAIHRIDDYAKANIPMLPNTHGIIYTKINILLYTLLLTAISFLPFVIMTSGWIYFSSVCLLNLGFLYWAIRLLTSQRKEIPMRTFQYSIWYLMLLFTALLVDHYVYLALKLY</sequence>
<gene>
    <name evidence="1" type="primary">cyoE</name>
    <name type="ordered locus">CBU_0996</name>
</gene>
<keyword id="KW-0997">Cell inner membrane</keyword>
<keyword id="KW-1003">Cell membrane</keyword>
<keyword id="KW-0350">Heme biosynthesis</keyword>
<keyword id="KW-0472">Membrane</keyword>
<keyword id="KW-1185">Reference proteome</keyword>
<keyword id="KW-0808">Transferase</keyword>
<keyword id="KW-0812">Transmembrane</keyword>
<keyword id="KW-1133">Transmembrane helix</keyword>
<protein>
    <recommendedName>
        <fullName evidence="1">Protoheme IX farnesyltransferase</fullName>
        <ecNumber evidence="1">2.5.1.141</ecNumber>
    </recommendedName>
    <alternativeName>
        <fullName evidence="1">Heme B farnesyltransferase</fullName>
    </alternativeName>
    <alternativeName>
        <fullName evidence="1">Heme O synthase</fullName>
    </alternativeName>
</protein>
<organism>
    <name type="scientific">Coxiella burnetii (strain RSA 493 / Nine Mile phase I)</name>
    <dbReference type="NCBI Taxonomy" id="227377"/>
    <lineage>
        <taxon>Bacteria</taxon>
        <taxon>Pseudomonadati</taxon>
        <taxon>Pseudomonadota</taxon>
        <taxon>Gammaproteobacteria</taxon>
        <taxon>Legionellales</taxon>
        <taxon>Coxiellaceae</taxon>
        <taxon>Coxiella</taxon>
    </lineage>
</organism>
<accession>Q83CV6</accession>
<proteinExistence type="inferred from homology"/>
<dbReference type="EC" id="2.5.1.141" evidence="1"/>
<dbReference type="EMBL" id="AE016828">
    <property type="protein sequence ID" value="AAO90517.1"/>
    <property type="molecule type" value="Genomic_DNA"/>
</dbReference>
<dbReference type="RefSeq" id="WP_005768584.1">
    <property type="nucleotide sequence ID" value="NZ_CCYB01000044.1"/>
</dbReference>
<dbReference type="SMR" id="Q83CV6"/>
<dbReference type="STRING" id="227377.CBU_0996"/>
<dbReference type="EnsemblBacteria" id="AAO90517">
    <property type="protein sequence ID" value="AAO90517"/>
    <property type="gene ID" value="CBU_0996"/>
</dbReference>
<dbReference type="KEGG" id="cbu:CBU_0996"/>
<dbReference type="PATRIC" id="fig|227377.7.peg.989"/>
<dbReference type="eggNOG" id="COG0109">
    <property type="taxonomic scope" value="Bacteria"/>
</dbReference>
<dbReference type="HOGENOM" id="CLU_029631_0_2_6"/>
<dbReference type="OrthoDB" id="9814417at2"/>
<dbReference type="UniPathway" id="UPA00834">
    <property type="reaction ID" value="UER00712"/>
</dbReference>
<dbReference type="Proteomes" id="UP000002671">
    <property type="component" value="Chromosome"/>
</dbReference>
<dbReference type="GO" id="GO:0005886">
    <property type="term" value="C:plasma membrane"/>
    <property type="evidence" value="ECO:0007669"/>
    <property type="project" value="UniProtKB-SubCell"/>
</dbReference>
<dbReference type="GO" id="GO:0008495">
    <property type="term" value="F:protoheme IX farnesyltransferase activity"/>
    <property type="evidence" value="ECO:0000318"/>
    <property type="project" value="GO_Central"/>
</dbReference>
<dbReference type="GO" id="GO:0006783">
    <property type="term" value="P:heme biosynthetic process"/>
    <property type="evidence" value="ECO:0000318"/>
    <property type="project" value="GO_Central"/>
</dbReference>
<dbReference type="GO" id="GO:0048034">
    <property type="term" value="P:heme O biosynthetic process"/>
    <property type="evidence" value="ECO:0007669"/>
    <property type="project" value="UniProtKB-UniRule"/>
</dbReference>
<dbReference type="CDD" id="cd13957">
    <property type="entry name" value="PT_UbiA_Cox10"/>
    <property type="match status" value="1"/>
</dbReference>
<dbReference type="FunFam" id="1.10.357.140:FF:000001">
    <property type="entry name" value="Protoheme IX farnesyltransferase"/>
    <property type="match status" value="1"/>
</dbReference>
<dbReference type="Gene3D" id="1.10.357.140">
    <property type="entry name" value="UbiA prenyltransferase"/>
    <property type="match status" value="1"/>
</dbReference>
<dbReference type="HAMAP" id="MF_00154">
    <property type="entry name" value="CyoE_CtaB"/>
    <property type="match status" value="1"/>
</dbReference>
<dbReference type="InterPro" id="IPR006369">
    <property type="entry name" value="Protohaem_IX_farnesylTrfase"/>
</dbReference>
<dbReference type="InterPro" id="IPR000537">
    <property type="entry name" value="UbiA_prenyltransferase"/>
</dbReference>
<dbReference type="InterPro" id="IPR030470">
    <property type="entry name" value="UbiA_prenylTrfase_CS"/>
</dbReference>
<dbReference type="InterPro" id="IPR044878">
    <property type="entry name" value="UbiA_sf"/>
</dbReference>
<dbReference type="NCBIfam" id="TIGR01473">
    <property type="entry name" value="cyoE_ctaB"/>
    <property type="match status" value="1"/>
</dbReference>
<dbReference type="NCBIfam" id="NF003349">
    <property type="entry name" value="PRK04375.1-2"/>
    <property type="match status" value="1"/>
</dbReference>
<dbReference type="PANTHER" id="PTHR43448:SF7">
    <property type="entry name" value="4-HYDROXYBENZOATE SOLANESYLTRANSFERASE"/>
    <property type="match status" value="1"/>
</dbReference>
<dbReference type="PANTHER" id="PTHR43448">
    <property type="entry name" value="PROTOHEME IX FARNESYLTRANSFERASE, MITOCHONDRIAL"/>
    <property type="match status" value="1"/>
</dbReference>
<dbReference type="Pfam" id="PF01040">
    <property type="entry name" value="UbiA"/>
    <property type="match status" value="1"/>
</dbReference>
<dbReference type="PROSITE" id="PS00943">
    <property type="entry name" value="UBIA"/>
    <property type="match status" value="1"/>
</dbReference>
<evidence type="ECO:0000255" key="1">
    <source>
        <dbReference type="HAMAP-Rule" id="MF_00154"/>
    </source>
</evidence>
<comment type="function">
    <text evidence="1">Converts heme B (protoheme IX) to heme O by substitution of the vinyl group on carbon 2 of heme B porphyrin ring with a hydroxyethyl farnesyl side group.</text>
</comment>
<comment type="catalytic activity">
    <reaction evidence="1">
        <text>heme b + (2E,6E)-farnesyl diphosphate + H2O = Fe(II)-heme o + diphosphate</text>
        <dbReference type="Rhea" id="RHEA:28070"/>
        <dbReference type="ChEBI" id="CHEBI:15377"/>
        <dbReference type="ChEBI" id="CHEBI:33019"/>
        <dbReference type="ChEBI" id="CHEBI:60344"/>
        <dbReference type="ChEBI" id="CHEBI:60530"/>
        <dbReference type="ChEBI" id="CHEBI:175763"/>
        <dbReference type="EC" id="2.5.1.141"/>
    </reaction>
</comment>
<comment type="pathway">
    <text evidence="1">Porphyrin-containing compound metabolism; heme O biosynthesis; heme O from protoheme: step 1/1.</text>
</comment>
<comment type="subcellular location">
    <subcellularLocation>
        <location evidence="1">Cell inner membrane</location>
        <topology evidence="1">Multi-pass membrane protein</topology>
    </subcellularLocation>
</comment>
<comment type="miscellaneous">
    <text evidence="1">Carbon 2 of the heme B porphyrin ring is defined according to the Fischer nomenclature.</text>
</comment>
<comment type="similarity">
    <text evidence="1">Belongs to the UbiA prenyltransferase family. Protoheme IX farnesyltransferase subfamily.</text>
</comment>
<name>CYOE_COXBU</name>